<sequence length="233" mass="25732">MGQKVHPTGIRLGISKPWVSTWYASSKDFSAQLFGDHKVRTFLTKELKTASVSKIVIERPAKSIRVTIHTARPGVVIGKKGEDVEKLRQAVTKIAGVPAQINISEVRKPELDAQLVADGIASQLERRVMFRRAMKRSVQNAMRIGSKGIKVEVSGRLGGAEIARTEWYREGRVPLHTLRADIDYATSEALTTYGIIGVKVWIFKGEVIGGLPLVQEQEKPAKRAPKKAKKSAK</sequence>
<dbReference type="EMBL" id="CR954246">
    <property type="protein sequence ID" value="CAI85254.1"/>
    <property type="molecule type" value="Genomic_DNA"/>
</dbReference>
<dbReference type="SMR" id="Q3IF19"/>
<dbReference type="STRING" id="326442.PSHAa0150"/>
<dbReference type="KEGG" id="pha:PSHAa0150"/>
<dbReference type="eggNOG" id="COG0092">
    <property type="taxonomic scope" value="Bacteria"/>
</dbReference>
<dbReference type="HOGENOM" id="CLU_058591_0_2_6"/>
<dbReference type="BioCyc" id="PHAL326442:PSHA_RS00765-MONOMER"/>
<dbReference type="Proteomes" id="UP000006843">
    <property type="component" value="Chromosome I"/>
</dbReference>
<dbReference type="GO" id="GO:0022627">
    <property type="term" value="C:cytosolic small ribosomal subunit"/>
    <property type="evidence" value="ECO:0007669"/>
    <property type="project" value="TreeGrafter"/>
</dbReference>
<dbReference type="GO" id="GO:0003729">
    <property type="term" value="F:mRNA binding"/>
    <property type="evidence" value="ECO:0007669"/>
    <property type="project" value="UniProtKB-UniRule"/>
</dbReference>
<dbReference type="GO" id="GO:0019843">
    <property type="term" value="F:rRNA binding"/>
    <property type="evidence" value="ECO:0007669"/>
    <property type="project" value="UniProtKB-UniRule"/>
</dbReference>
<dbReference type="GO" id="GO:0003735">
    <property type="term" value="F:structural constituent of ribosome"/>
    <property type="evidence" value="ECO:0007669"/>
    <property type="project" value="InterPro"/>
</dbReference>
<dbReference type="GO" id="GO:0006412">
    <property type="term" value="P:translation"/>
    <property type="evidence" value="ECO:0007669"/>
    <property type="project" value="UniProtKB-UniRule"/>
</dbReference>
<dbReference type="CDD" id="cd02412">
    <property type="entry name" value="KH-II_30S_S3"/>
    <property type="match status" value="1"/>
</dbReference>
<dbReference type="FunFam" id="3.30.1140.32:FF:000001">
    <property type="entry name" value="30S ribosomal protein S3"/>
    <property type="match status" value="1"/>
</dbReference>
<dbReference type="FunFam" id="3.30.300.20:FF:000001">
    <property type="entry name" value="30S ribosomal protein S3"/>
    <property type="match status" value="1"/>
</dbReference>
<dbReference type="Gene3D" id="3.30.300.20">
    <property type="match status" value="1"/>
</dbReference>
<dbReference type="Gene3D" id="3.30.1140.32">
    <property type="entry name" value="Ribosomal protein S3, C-terminal domain"/>
    <property type="match status" value="1"/>
</dbReference>
<dbReference type="HAMAP" id="MF_01309_B">
    <property type="entry name" value="Ribosomal_uS3_B"/>
    <property type="match status" value="1"/>
</dbReference>
<dbReference type="InterPro" id="IPR004087">
    <property type="entry name" value="KH_dom"/>
</dbReference>
<dbReference type="InterPro" id="IPR015946">
    <property type="entry name" value="KH_dom-like_a/b"/>
</dbReference>
<dbReference type="InterPro" id="IPR004044">
    <property type="entry name" value="KH_dom_type_2"/>
</dbReference>
<dbReference type="InterPro" id="IPR009019">
    <property type="entry name" value="KH_sf_prok-type"/>
</dbReference>
<dbReference type="InterPro" id="IPR036419">
    <property type="entry name" value="Ribosomal_S3_C_sf"/>
</dbReference>
<dbReference type="InterPro" id="IPR005704">
    <property type="entry name" value="Ribosomal_uS3_bac-typ"/>
</dbReference>
<dbReference type="InterPro" id="IPR001351">
    <property type="entry name" value="Ribosomal_uS3_C"/>
</dbReference>
<dbReference type="InterPro" id="IPR018280">
    <property type="entry name" value="Ribosomal_uS3_CS"/>
</dbReference>
<dbReference type="NCBIfam" id="TIGR01009">
    <property type="entry name" value="rpsC_bact"/>
    <property type="match status" value="1"/>
</dbReference>
<dbReference type="PANTHER" id="PTHR11760">
    <property type="entry name" value="30S/40S RIBOSOMAL PROTEIN S3"/>
    <property type="match status" value="1"/>
</dbReference>
<dbReference type="PANTHER" id="PTHR11760:SF19">
    <property type="entry name" value="SMALL RIBOSOMAL SUBUNIT PROTEIN US3C"/>
    <property type="match status" value="1"/>
</dbReference>
<dbReference type="Pfam" id="PF07650">
    <property type="entry name" value="KH_2"/>
    <property type="match status" value="1"/>
</dbReference>
<dbReference type="Pfam" id="PF00189">
    <property type="entry name" value="Ribosomal_S3_C"/>
    <property type="match status" value="1"/>
</dbReference>
<dbReference type="SMART" id="SM00322">
    <property type="entry name" value="KH"/>
    <property type="match status" value="1"/>
</dbReference>
<dbReference type="SUPFAM" id="SSF54814">
    <property type="entry name" value="Prokaryotic type KH domain (KH-domain type II)"/>
    <property type="match status" value="1"/>
</dbReference>
<dbReference type="SUPFAM" id="SSF54821">
    <property type="entry name" value="Ribosomal protein S3 C-terminal domain"/>
    <property type="match status" value="1"/>
</dbReference>
<dbReference type="PROSITE" id="PS50823">
    <property type="entry name" value="KH_TYPE_2"/>
    <property type="match status" value="1"/>
</dbReference>
<dbReference type="PROSITE" id="PS00548">
    <property type="entry name" value="RIBOSOMAL_S3"/>
    <property type="match status" value="1"/>
</dbReference>
<accession>Q3IF19</accession>
<keyword id="KW-1185">Reference proteome</keyword>
<keyword id="KW-0687">Ribonucleoprotein</keyword>
<keyword id="KW-0689">Ribosomal protein</keyword>
<keyword id="KW-0694">RNA-binding</keyword>
<keyword id="KW-0699">rRNA-binding</keyword>
<evidence type="ECO:0000255" key="1">
    <source>
        <dbReference type="HAMAP-Rule" id="MF_01309"/>
    </source>
</evidence>
<evidence type="ECO:0000305" key="2"/>
<organism>
    <name type="scientific">Pseudoalteromonas translucida (strain TAC 125)</name>
    <dbReference type="NCBI Taxonomy" id="326442"/>
    <lineage>
        <taxon>Bacteria</taxon>
        <taxon>Pseudomonadati</taxon>
        <taxon>Pseudomonadota</taxon>
        <taxon>Gammaproteobacteria</taxon>
        <taxon>Alteromonadales</taxon>
        <taxon>Pseudoalteromonadaceae</taxon>
        <taxon>Pseudoalteromonas</taxon>
    </lineage>
</organism>
<reference key="1">
    <citation type="journal article" date="2005" name="Genome Res.">
        <title>Coping with cold: the genome of the versatile marine Antarctica bacterium Pseudoalteromonas haloplanktis TAC125.</title>
        <authorList>
            <person name="Medigue C."/>
            <person name="Krin E."/>
            <person name="Pascal G."/>
            <person name="Barbe V."/>
            <person name="Bernsel A."/>
            <person name="Bertin P.N."/>
            <person name="Cheung F."/>
            <person name="Cruveiller S."/>
            <person name="D'Amico S."/>
            <person name="Duilio A."/>
            <person name="Fang G."/>
            <person name="Feller G."/>
            <person name="Ho C."/>
            <person name="Mangenot S."/>
            <person name="Marino G."/>
            <person name="Nilsson J."/>
            <person name="Parrilli E."/>
            <person name="Rocha E.P.C."/>
            <person name="Rouy Z."/>
            <person name="Sekowska A."/>
            <person name="Tutino M.L."/>
            <person name="Vallenet D."/>
            <person name="von Heijne G."/>
            <person name="Danchin A."/>
        </authorList>
    </citation>
    <scope>NUCLEOTIDE SEQUENCE [LARGE SCALE GENOMIC DNA]</scope>
    <source>
        <strain>TAC 125</strain>
    </source>
</reference>
<gene>
    <name evidence="1" type="primary">rpsC</name>
    <name type="ordered locus">PSHAa0150</name>
</gene>
<comment type="function">
    <text evidence="1">Binds the lower part of the 30S subunit head. Binds mRNA in the 70S ribosome, positioning it for translation.</text>
</comment>
<comment type="subunit">
    <text evidence="1">Part of the 30S ribosomal subunit. Forms a tight complex with proteins S10 and S14.</text>
</comment>
<comment type="similarity">
    <text evidence="1">Belongs to the universal ribosomal protein uS3 family.</text>
</comment>
<protein>
    <recommendedName>
        <fullName evidence="1">Small ribosomal subunit protein uS3</fullName>
    </recommendedName>
    <alternativeName>
        <fullName evidence="2">30S ribosomal protein S3</fullName>
    </alternativeName>
</protein>
<proteinExistence type="inferred from homology"/>
<feature type="chain" id="PRO_0000230715" description="Small ribosomal subunit protein uS3">
    <location>
        <begin position="1"/>
        <end position="233"/>
    </location>
</feature>
<feature type="domain" description="KH type-2" evidence="1">
    <location>
        <begin position="39"/>
        <end position="107"/>
    </location>
</feature>
<name>RS3_PSET1</name>